<protein>
    <recommendedName>
        <fullName>Melanoma-associated antigen H1</fullName>
    </recommendedName>
    <alternativeName>
        <fullName>Apoptosis-related protein 1</fullName>
        <shortName>APR-1</shortName>
    </alternativeName>
    <alternativeName>
        <fullName>MAGE-H1 antigen</fullName>
    </alternativeName>
    <alternativeName>
        <fullName>Restin</fullName>
    </alternativeName>
</protein>
<evidence type="ECO:0000250" key="1">
    <source>
        <dbReference type="UniProtKB" id="Q5PPP4"/>
    </source>
</evidence>
<evidence type="ECO:0000255" key="2">
    <source>
        <dbReference type="PROSITE-ProRule" id="PRU00127"/>
    </source>
</evidence>
<evidence type="ECO:0000256" key="3">
    <source>
        <dbReference type="SAM" id="MobiDB-lite"/>
    </source>
</evidence>
<sequence>MPRGRKSRRRRNARAAEENRNNRKIQASEASETPMAASVVASTPEDDLSGPEEDPSTPEEASTTPEEASSTAQAQKPSVPRSNFQGTKKSLLMSILALIFIMGNSAKEALVWKVLGKLGMQPGRQHSIFGDPKKIVTEEFVRRGYLIYKPVPRSSPVEYEFFWGPRAHVESSKLKVMHFVARVRNRCSKDWPCNYDWDSDDDAEVEAILNSGARGYSAP</sequence>
<organism>
    <name type="scientific">Homo sapiens</name>
    <name type="common">Human</name>
    <dbReference type="NCBI Taxonomy" id="9606"/>
    <lineage>
        <taxon>Eukaryota</taxon>
        <taxon>Metazoa</taxon>
        <taxon>Chordata</taxon>
        <taxon>Craniata</taxon>
        <taxon>Vertebrata</taxon>
        <taxon>Euteleostomi</taxon>
        <taxon>Mammalia</taxon>
        <taxon>Eutheria</taxon>
        <taxon>Euarchontoglires</taxon>
        <taxon>Primates</taxon>
        <taxon>Haplorrhini</taxon>
        <taxon>Catarrhini</taxon>
        <taxon>Hominidae</taxon>
        <taxon>Homo</taxon>
    </lineage>
</organism>
<accession>Q9H213</accession>
<accession>B2R8V9</accession>
<accession>Q5JRJ3</accession>
<accession>Q9Y5M2</accession>
<gene>
    <name type="primary">MAGEH1</name>
    <name type="synonym">APR1</name>
</gene>
<feature type="chain" id="PRO_0000156735" description="Melanoma-associated antigen H1">
    <location>
        <begin position="1"/>
        <end position="219"/>
    </location>
</feature>
<feature type="domain" description="MAGE" evidence="2">
    <location>
        <begin position="1"/>
        <end position="198"/>
    </location>
</feature>
<feature type="region of interest" description="Disordered" evidence="3">
    <location>
        <begin position="1"/>
        <end position="84"/>
    </location>
</feature>
<feature type="compositionally biased region" description="Basic residues" evidence="3">
    <location>
        <begin position="1"/>
        <end position="13"/>
    </location>
</feature>
<feature type="compositionally biased region" description="Acidic residues" evidence="3">
    <location>
        <begin position="44"/>
        <end position="57"/>
    </location>
</feature>
<feature type="compositionally biased region" description="Low complexity" evidence="3">
    <location>
        <begin position="58"/>
        <end position="74"/>
    </location>
</feature>
<feature type="modified residue" description="Phosphotyrosine" evidence="1">
    <location>
        <position position="195"/>
    </location>
</feature>
<keyword id="KW-0597">Phosphoprotein</keyword>
<keyword id="KW-1267">Proteomics identification</keyword>
<keyword id="KW-1185">Reference proteome</keyword>
<keyword id="KW-0825">Tumor antigen</keyword>
<proteinExistence type="evidence at protein level"/>
<dbReference type="EMBL" id="AF320912">
    <property type="protein sequence ID" value="AAG38608.1"/>
    <property type="molecule type" value="mRNA"/>
</dbReference>
<dbReference type="EMBL" id="AF143235">
    <property type="protein sequence ID" value="AAD31314.4"/>
    <property type="molecule type" value="mRNA"/>
</dbReference>
<dbReference type="EMBL" id="AK313527">
    <property type="protein sequence ID" value="BAG36306.1"/>
    <property type="molecule type" value="mRNA"/>
</dbReference>
<dbReference type="EMBL" id="AL590410">
    <property type="status" value="NOT_ANNOTATED_CDS"/>
    <property type="molecule type" value="Genomic_DNA"/>
</dbReference>
<dbReference type="EMBL" id="CH471154">
    <property type="protein sequence ID" value="EAW93222.1"/>
    <property type="molecule type" value="Genomic_DNA"/>
</dbReference>
<dbReference type="EMBL" id="BC011954">
    <property type="protein sequence ID" value="AAH11954.1"/>
    <property type="molecule type" value="mRNA"/>
</dbReference>
<dbReference type="CCDS" id="CCDS14369.1"/>
<dbReference type="RefSeq" id="NP_054780.2">
    <property type="nucleotide sequence ID" value="NM_014061.4"/>
</dbReference>
<dbReference type="SMR" id="Q9H213"/>
<dbReference type="BioGRID" id="118807">
    <property type="interactions" value="21"/>
</dbReference>
<dbReference type="FunCoup" id="Q9H213">
    <property type="interactions" value="537"/>
</dbReference>
<dbReference type="IntAct" id="Q9H213">
    <property type="interactions" value="19"/>
</dbReference>
<dbReference type="STRING" id="9606.ENSP00000343706"/>
<dbReference type="iPTMnet" id="Q9H213"/>
<dbReference type="PhosphoSitePlus" id="Q9H213"/>
<dbReference type="BioMuta" id="MAGEH1"/>
<dbReference type="DMDM" id="14423761"/>
<dbReference type="MassIVE" id="Q9H213"/>
<dbReference type="PaxDb" id="9606-ENSP00000343706"/>
<dbReference type="PeptideAtlas" id="Q9H213"/>
<dbReference type="ProteomicsDB" id="80472"/>
<dbReference type="Antibodypedia" id="568">
    <property type="antibodies" value="153 antibodies from 29 providers"/>
</dbReference>
<dbReference type="DNASU" id="28986"/>
<dbReference type="Ensembl" id="ENST00000342972.3">
    <property type="protein sequence ID" value="ENSP00000343706.1"/>
    <property type="gene ID" value="ENSG00000187601.5"/>
</dbReference>
<dbReference type="GeneID" id="28986"/>
<dbReference type="KEGG" id="hsa:28986"/>
<dbReference type="MANE-Select" id="ENST00000342972.3">
    <property type="protein sequence ID" value="ENSP00000343706.1"/>
    <property type="RefSeq nucleotide sequence ID" value="NM_014061.5"/>
    <property type="RefSeq protein sequence ID" value="NP_054780.2"/>
</dbReference>
<dbReference type="UCSC" id="uc004dum.5">
    <property type="organism name" value="human"/>
</dbReference>
<dbReference type="AGR" id="HGNC:24092"/>
<dbReference type="CTD" id="28986"/>
<dbReference type="DisGeNET" id="28986"/>
<dbReference type="GeneCards" id="MAGEH1"/>
<dbReference type="HGNC" id="HGNC:24092">
    <property type="gene designation" value="MAGEH1"/>
</dbReference>
<dbReference type="HPA" id="ENSG00000187601">
    <property type="expression patterns" value="Tissue enriched (epididymis)"/>
</dbReference>
<dbReference type="MIM" id="300548">
    <property type="type" value="gene"/>
</dbReference>
<dbReference type="neXtProt" id="NX_Q9H213"/>
<dbReference type="OpenTargets" id="ENSG00000187601"/>
<dbReference type="PharmGKB" id="PA128394650"/>
<dbReference type="VEuPathDB" id="HostDB:ENSG00000187601"/>
<dbReference type="eggNOG" id="KOG4562">
    <property type="taxonomic scope" value="Eukaryota"/>
</dbReference>
<dbReference type="GeneTree" id="ENSGT00840000130063"/>
<dbReference type="HOGENOM" id="CLU_107642_0_0_1"/>
<dbReference type="InParanoid" id="Q9H213"/>
<dbReference type="OMA" id="MEYEFFW"/>
<dbReference type="OrthoDB" id="205198at2759"/>
<dbReference type="PAN-GO" id="Q9H213">
    <property type="GO annotations" value="2 GO annotations based on evolutionary models"/>
</dbReference>
<dbReference type="PhylomeDB" id="Q9H213"/>
<dbReference type="TreeFam" id="TF328505"/>
<dbReference type="PathwayCommons" id="Q9H213"/>
<dbReference type="SignaLink" id="Q9H213"/>
<dbReference type="BioGRID-ORCS" id="28986">
    <property type="hits" value="13 hits in 778 CRISPR screens"/>
</dbReference>
<dbReference type="ChiTaRS" id="MAGEH1">
    <property type="organism name" value="human"/>
</dbReference>
<dbReference type="GeneWiki" id="MAGEH1"/>
<dbReference type="GenomeRNAi" id="28986"/>
<dbReference type="Pharos" id="Q9H213">
    <property type="development level" value="Tbio"/>
</dbReference>
<dbReference type="PRO" id="PR:Q9H213"/>
<dbReference type="Proteomes" id="UP000005640">
    <property type="component" value="Chromosome X"/>
</dbReference>
<dbReference type="RNAct" id="Q9H213">
    <property type="molecule type" value="protein"/>
</dbReference>
<dbReference type="Bgee" id="ENSG00000187601">
    <property type="expression patterns" value="Expressed in corpus epididymis and 197 other cell types or tissues"/>
</dbReference>
<dbReference type="GO" id="GO:0005634">
    <property type="term" value="C:nucleus"/>
    <property type="evidence" value="ECO:0000318"/>
    <property type="project" value="GO_Central"/>
</dbReference>
<dbReference type="GO" id="GO:0006915">
    <property type="term" value="P:apoptotic process"/>
    <property type="evidence" value="ECO:0000304"/>
    <property type="project" value="ProtInc"/>
</dbReference>
<dbReference type="GO" id="GO:0000122">
    <property type="term" value="P:negative regulation of transcription by RNA polymerase II"/>
    <property type="evidence" value="ECO:0000318"/>
    <property type="project" value="GO_Central"/>
</dbReference>
<dbReference type="FunFam" id="1.10.10.1210:FF:000001">
    <property type="entry name" value="melanoma-associated antigen D1"/>
    <property type="match status" value="1"/>
</dbReference>
<dbReference type="Gene3D" id="1.10.10.1210">
    <property type="entry name" value="MAGE homology domain, winged helix WH2 motif"/>
    <property type="match status" value="1"/>
</dbReference>
<dbReference type="InterPro" id="IPR037445">
    <property type="entry name" value="MAGE"/>
</dbReference>
<dbReference type="InterPro" id="IPR041899">
    <property type="entry name" value="MAGE_WH2"/>
</dbReference>
<dbReference type="InterPro" id="IPR002190">
    <property type="entry name" value="MHD_dom"/>
</dbReference>
<dbReference type="PANTHER" id="PTHR11736:SF8">
    <property type="entry name" value="MELANOMA-ASSOCIATED ANTIGEN H1"/>
    <property type="match status" value="1"/>
</dbReference>
<dbReference type="PANTHER" id="PTHR11736">
    <property type="entry name" value="MELANOMA-ASSOCIATED ANTIGEN MAGE ANTIGEN"/>
    <property type="match status" value="1"/>
</dbReference>
<dbReference type="Pfam" id="PF01454">
    <property type="entry name" value="MAGE"/>
    <property type="match status" value="1"/>
</dbReference>
<dbReference type="SMART" id="SM01373">
    <property type="entry name" value="MAGE"/>
    <property type="match status" value="1"/>
</dbReference>
<dbReference type="PROSITE" id="PS50838">
    <property type="entry name" value="MAGE"/>
    <property type="match status" value="1"/>
</dbReference>
<reference key="1">
    <citation type="journal article" date="2001" name="Cancer Res.">
        <title>An overview of the MAGE gene family with the identification of all human members of the family.</title>
        <authorList>
            <person name="Chomez P."/>
            <person name="De Backer O."/>
            <person name="Bertrand M."/>
            <person name="De Plaen E."/>
            <person name="Boon T."/>
            <person name="Lucas S."/>
        </authorList>
    </citation>
    <scope>NUCLEOTIDE SEQUENCE [MRNA]</scope>
    <source>
        <tissue>Brain</tissue>
        <tissue>Testis</tissue>
    </source>
</reference>
<reference key="2">
    <citation type="journal article" date="2000" name="BioTechniques">
        <title>Improved PCR-based subtractive hybridization strategy for cloning differentially expressed genes.</title>
        <authorList>
            <person name="Zhu F."/>
            <person name="Yan W."/>
            <person name="Zhao Z.L."/>
            <person name="Chai Y.B."/>
            <person name="Lu F."/>
            <person name="Wang Q."/>
            <person name="Peng W.D."/>
            <person name="Yang A.G."/>
            <person name="Wang C.J."/>
        </authorList>
    </citation>
    <scope>NUCLEOTIDE SEQUENCE [MRNA]</scope>
</reference>
<reference key="3">
    <citation type="journal article" date="2004" name="Nat. Genet.">
        <title>Complete sequencing and characterization of 21,243 full-length human cDNAs.</title>
        <authorList>
            <person name="Ota T."/>
            <person name="Suzuki Y."/>
            <person name="Nishikawa T."/>
            <person name="Otsuki T."/>
            <person name="Sugiyama T."/>
            <person name="Irie R."/>
            <person name="Wakamatsu A."/>
            <person name="Hayashi K."/>
            <person name="Sato H."/>
            <person name="Nagai K."/>
            <person name="Kimura K."/>
            <person name="Makita H."/>
            <person name="Sekine M."/>
            <person name="Obayashi M."/>
            <person name="Nishi T."/>
            <person name="Shibahara T."/>
            <person name="Tanaka T."/>
            <person name="Ishii S."/>
            <person name="Yamamoto J."/>
            <person name="Saito K."/>
            <person name="Kawai Y."/>
            <person name="Isono Y."/>
            <person name="Nakamura Y."/>
            <person name="Nagahari K."/>
            <person name="Murakami K."/>
            <person name="Yasuda T."/>
            <person name="Iwayanagi T."/>
            <person name="Wagatsuma M."/>
            <person name="Shiratori A."/>
            <person name="Sudo H."/>
            <person name="Hosoiri T."/>
            <person name="Kaku Y."/>
            <person name="Kodaira H."/>
            <person name="Kondo H."/>
            <person name="Sugawara M."/>
            <person name="Takahashi M."/>
            <person name="Kanda K."/>
            <person name="Yokoi T."/>
            <person name="Furuya T."/>
            <person name="Kikkawa E."/>
            <person name="Omura Y."/>
            <person name="Abe K."/>
            <person name="Kamihara K."/>
            <person name="Katsuta N."/>
            <person name="Sato K."/>
            <person name="Tanikawa M."/>
            <person name="Yamazaki M."/>
            <person name="Ninomiya K."/>
            <person name="Ishibashi T."/>
            <person name="Yamashita H."/>
            <person name="Murakawa K."/>
            <person name="Fujimori K."/>
            <person name="Tanai H."/>
            <person name="Kimata M."/>
            <person name="Watanabe M."/>
            <person name="Hiraoka S."/>
            <person name="Chiba Y."/>
            <person name="Ishida S."/>
            <person name="Ono Y."/>
            <person name="Takiguchi S."/>
            <person name="Watanabe S."/>
            <person name="Yosida M."/>
            <person name="Hotuta T."/>
            <person name="Kusano J."/>
            <person name="Kanehori K."/>
            <person name="Takahashi-Fujii A."/>
            <person name="Hara H."/>
            <person name="Tanase T.-O."/>
            <person name="Nomura Y."/>
            <person name="Togiya S."/>
            <person name="Komai F."/>
            <person name="Hara R."/>
            <person name="Takeuchi K."/>
            <person name="Arita M."/>
            <person name="Imose N."/>
            <person name="Musashino K."/>
            <person name="Yuuki H."/>
            <person name="Oshima A."/>
            <person name="Sasaki N."/>
            <person name="Aotsuka S."/>
            <person name="Yoshikawa Y."/>
            <person name="Matsunawa H."/>
            <person name="Ichihara T."/>
            <person name="Shiohata N."/>
            <person name="Sano S."/>
            <person name="Moriya S."/>
            <person name="Momiyama H."/>
            <person name="Satoh N."/>
            <person name="Takami S."/>
            <person name="Terashima Y."/>
            <person name="Suzuki O."/>
            <person name="Nakagawa S."/>
            <person name="Senoh A."/>
            <person name="Mizoguchi H."/>
            <person name="Goto Y."/>
            <person name="Shimizu F."/>
            <person name="Wakebe H."/>
            <person name="Hishigaki H."/>
            <person name="Watanabe T."/>
            <person name="Sugiyama A."/>
            <person name="Takemoto M."/>
            <person name="Kawakami B."/>
            <person name="Yamazaki M."/>
            <person name="Watanabe K."/>
            <person name="Kumagai A."/>
            <person name="Itakura S."/>
            <person name="Fukuzumi Y."/>
            <person name="Fujimori Y."/>
            <person name="Komiyama M."/>
            <person name="Tashiro H."/>
            <person name="Tanigami A."/>
            <person name="Fujiwara T."/>
            <person name="Ono T."/>
            <person name="Yamada K."/>
            <person name="Fujii Y."/>
            <person name="Ozaki K."/>
            <person name="Hirao M."/>
            <person name="Ohmori Y."/>
            <person name="Kawabata A."/>
            <person name="Hikiji T."/>
            <person name="Kobatake N."/>
            <person name="Inagaki H."/>
            <person name="Ikema Y."/>
            <person name="Okamoto S."/>
            <person name="Okitani R."/>
            <person name="Kawakami T."/>
            <person name="Noguchi S."/>
            <person name="Itoh T."/>
            <person name="Shigeta K."/>
            <person name="Senba T."/>
            <person name="Matsumura K."/>
            <person name="Nakajima Y."/>
            <person name="Mizuno T."/>
            <person name="Morinaga M."/>
            <person name="Sasaki M."/>
            <person name="Togashi T."/>
            <person name="Oyama M."/>
            <person name="Hata H."/>
            <person name="Watanabe M."/>
            <person name="Komatsu T."/>
            <person name="Mizushima-Sugano J."/>
            <person name="Satoh T."/>
            <person name="Shirai Y."/>
            <person name="Takahashi Y."/>
            <person name="Nakagawa K."/>
            <person name="Okumura K."/>
            <person name="Nagase T."/>
            <person name="Nomura N."/>
            <person name="Kikuchi H."/>
            <person name="Masuho Y."/>
            <person name="Yamashita R."/>
            <person name="Nakai K."/>
            <person name="Yada T."/>
            <person name="Nakamura Y."/>
            <person name="Ohara O."/>
            <person name="Isogai T."/>
            <person name="Sugano S."/>
        </authorList>
    </citation>
    <scope>NUCLEOTIDE SEQUENCE [LARGE SCALE MRNA]</scope>
</reference>
<reference key="4">
    <citation type="journal article" date="2005" name="Nature">
        <title>The DNA sequence of the human X chromosome.</title>
        <authorList>
            <person name="Ross M.T."/>
            <person name="Grafham D.V."/>
            <person name="Coffey A.J."/>
            <person name="Scherer S."/>
            <person name="McLay K."/>
            <person name="Muzny D."/>
            <person name="Platzer M."/>
            <person name="Howell G.R."/>
            <person name="Burrows C."/>
            <person name="Bird C.P."/>
            <person name="Frankish A."/>
            <person name="Lovell F.L."/>
            <person name="Howe K.L."/>
            <person name="Ashurst J.L."/>
            <person name="Fulton R.S."/>
            <person name="Sudbrak R."/>
            <person name="Wen G."/>
            <person name="Jones M.C."/>
            <person name="Hurles M.E."/>
            <person name="Andrews T.D."/>
            <person name="Scott C.E."/>
            <person name="Searle S."/>
            <person name="Ramser J."/>
            <person name="Whittaker A."/>
            <person name="Deadman R."/>
            <person name="Carter N.P."/>
            <person name="Hunt S.E."/>
            <person name="Chen R."/>
            <person name="Cree A."/>
            <person name="Gunaratne P."/>
            <person name="Havlak P."/>
            <person name="Hodgson A."/>
            <person name="Metzker M.L."/>
            <person name="Richards S."/>
            <person name="Scott G."/>
            <person name="Steffen D."/>
            <person name="Sodergren E."/>
            <person name="Wheeler D.A."/>
            <person name="Worley K.C."/>
            <person name="Ainscough R."/>
            <person name="Ambrose K.D."/>
            <person name="Ansari-Lari M.A."/>
            <person name="Aradhya S."/>
            <person name="Ashwell R.I."/>
            <person name="Babbage A.K."/>
            <person name="Bagguley C.L."/>
            <person name="Ballabio A."/>
            <person name="Banerjee R."/>
            <person name="Barker G.E."/>
            <person name="Barlow K.F."/>
            <person name="Barrett I.P."/>
            <person name="Bates K.N."/>
            <person name="Beare D.M."/>
            <person name="Beasley H."/>
            <person name="Beasley O."/>
            <person name="Beck A."/>
            <person name="Bethel G."/>
            <person name="Blechschmidt K."/>
            <person name="Brady N."/>
            <person name="Bray-Allen S."/>
            <person name="Bridgeman A.M."/>
            <person name="Brown A.J."/>
            <person name="Brown M.J."/>
            <person name="Bonnin D."/>
            <person name="Bruford E.A."/>
            <person name="Buhay C."/>
            <person name="Burch P."/>
            <person name="Burford D."/>
            <person name="Burgess J."/>
            <person name="Burrill W."/>
            <person name="Burton J."/>
            <person name="Bye J.M."/>
            <person name="Carder C."/>
            <person name="Carrel L."/>
            <person name="Chako J."/>
            <person name="Chapman J.C."/>
            <person name="Chavez D."/>
            <person name="Chen E."/>
            <person name="Chen G."/>
            <person name="Chen Y."/>
            <person name="Chen Z."/>
            <person name="Chinault C."/>
            <person name="Ciccodicola A."/>
            <person name="Clark S.Y."/>
            <person name="Clarke G."/>
            <person name="Clee C.M."/>
            <person name="Clegg S."/>
            <person name="Clerc-Blankenburg K."/>
            <person name="Clifford K."/>
            <person name="Cobley V."/>
            <person name="Cole C.G."/>
            <person name="Conquer J.S."/>
            <person name="Corby N."/>
            <person name="Connor R.E."/>
            <person name="David R."/>
            <person name="Davies J."/>
            <person name="Davis C."/>
            <person name="Davis J."/>
            <person name="Delgado O."/>
            <person name="Deshazo D."/>
            <person name="Dhami P."/>
            <person name="Ding Y."/>
            <person name="Dinh H."/>
            <person name="Dodsworth S."/>
            <person name="Draper H."/>
            <person name="Dugan-Rocha S."/>
            <person name="Dunham A."/>
            <person name="Dunn M."/>
            <person name="Durbin K.J."/>
            <person name="Dutta I."/>
            <person name="Eades T."/>
            <person name="Ellwood M."/>
            <person name="Emery-Cohen A."/>
            <person name="Errington H."/>
            <person name="Evans K.L."/>
            <person name="Faulkner L."/>
            <person name="Francis F."/>
            <person name="Frankland J."/>
            <person name="Fraser A.E."/>
            <person name="Galgoczy P."/>
            <person name="Gilbert J."/>
            <person name="Gill R."/>
            <person name="Gloeckner G."/>
            <person name="Gregory S.G."/>
            <person name="Gribble S."/>
            <person name="Griffiths C."/>
            <person name="Grocock R."/>
            <person name="Gu Y."/>
            <person name="Gwilliam R."/>
            <person name="Hamilton C."/>
            <person name="Hart E.A."/>
            <person name="Hawes A."/>
            <person name="Heath P.D."/>
            <person name="Heitmann K."/>
            <person name="Hennig S."/>
            <person name="Hernandez J."/>
            <person name="Hinzmann B."/>
            <person name="Ho S."/>
            <person name="Hoffs M."/>
            <person name="Howden P.J."/>
            <person name="Huckle E.J."/>
            <person name="Hume J."/>
            <person name="Hunt P.J."/>
            <person name="Hunt A.R."/>
            <person name="Isherwood J."/>
            <person name="Jacob L."/>
            <person name="Johnson D."/>
            <person name="Jones S."/>
            <person name="de Jong P.J."/>
            <person name="Joseph S.S."/>
            <person name="Keenan S."/>
            <person name="Kelly S."/>
            <person name="Kershaw J.K."/>
            <person name="Khan Z."/>
            <person name="Kioschis P."/>
            <person name="Klages S."/>
            <person name="Knights A.J."/>
            <person name="Kosiura A."/>
            <person name="Kovar-Smith C."/>
            <person name="Laird G.K."/>
            <person name="Langford C."/>
            <person name="Lawlor S."/>
            <person name="Leversha M."/>
            <person name="Lewis L."/>
            <person name="Liu W."/>
            <person name="Lloyd C."/>
            <person name="Lloyd D.M."/>
            <person name="Loulseged H."/>
            <person name="Loveland J.E."/>
            <person name="Lovell J.D."/>
            <person name="Lozado R."/>
            <person name="Lu J."/>
            <person name="Lyne R."/>
            <person name="Ma J."/>
            <person name="Maheshwari M."/>
            <person name="Matthews L.H."/>
            <person name="McDowall J."/>
            <person name="McLaren S."/>
            <person name="McMurray A."/>
            <person name="Meidl P."/>
            <person name="Meitinger T."/>
            <person name="Milne S."/>
            <person name="Miner G."/>
            <person name="Mistry S.L."/>
            <person name="Morgan M."/>
            <person name="Morris S."/>
            <person name="Mueller I."/>
            <person name="Mullikin J.C."/>
            <person name="Nguyen N."/>
            <person name="Nordsiek G."/>
            <person name="Nyakatura G."/>
            <person name="O'dell C.N."/>
            <person name="Okwuonu G."/>
            <person name="Palmer S."/>
            <person name="Pandian R."/>
            <person name="Parker D."/>
            <person name="Parrish J."/>
            <person name="Pasternak S."/>
            <person name="Patel D."/>
            <person name="Pearce A.V."/>
            <person name="Pearson D.M."/>
            <person name="Pelan S.E."/>
            <person name="Perez L."/>
            <person name="Porter K.M."/>
            <person name="Ramsey Y."/>
            <person name="Reichwald K."/>
            <person name="Rhodes S."/>
            <person name="Ridler K.A."/>
            <person name="Schlessinger D."/>
            <person name="Schueler M.G."/>
            <person name="Sehra H.K."/>
            <person name="Shaw-Smith C."/>
            <person name="Shen H."/>
            <person name="Sheridan E.M."/>
            <person name="Shownkeen R."/>
            <person name="Skuce C.D."/>
            <person name="Smith M.L."/>
            <person name="Sotheran E.C."/>
            <person name="Steingruber H.E."/>
            <person name="Steward C.A."/>
            <person name="Storey R."/>
            <person name="Swann R.M."/>
            <person name="Swarbreck D."/>
            <person name="Tabor P.E."/>
            <person name="Taudien S."/>
            <person name="Taylor T."/>
            <person name="Teague B."/>
            <person name="Thomas K."/>
            <person name="Thorpe A."/>
            <person name="Timms K."/>
            <person name="Tracey A."/>
            <person name="Trevanion S."/>
            <person name="Tromans A.C."/>
            <person name="d'Urso M."/>
            <person name="Verduzco D."/>
            <person name="Villasana D."/>
            <person name="Waldron L."/>
            <person name="Wall M."/>
            <person name="Wang Q."/>
            <person name="Warren J."/>
            <person name="Warry G.L."/>
            <person name="Wei X."/>
            <person name="West A."/>
            <person name="Whitehead S.L."/>
            <person name="Whiteley M.N."/>
            <person name="Wilkinson J.E."/>
            <person name="Willey D.L."/>
            <person name="Williams G."/>
            <person name="Williams L."/>
            <person name="Williamson A."/>
            <person name="Williamson H."/>
            <person name="Wilming L."/>
            <person name="Woodmansey R.L."/>
            <person name="Wray P.W."/>
            <person name="Yen J."/>
            <person name="Zhang J."/>
            <person name="Zhou J."/>
            <person name="Zoghbi H."/>
            <person name="Zorilla S."/>
            <person name="Buck D."/>
            <person name="Reinhardt R."/>
            <person name="Poustka A."/>
            <person name="Rosenthal A."/>
            <person name="Lehrach H."/>
            <person name="Meindl A."/>
            <person name="Minx P.J."/>
            <person name="Hillier L.W."/>
            <person name="Willard H.F."/>
            <person name="Wilson R.K."/>
            <person name="Waterston R.H."/>
            <person name="Rice C.M."/>
            <person name="Vaudin M."/>
            <person name="Coulson A."/>
            <person name="Nelson D.L."/>
            <person name="Weinstock G."/>
            <person name="Sulston J.E."/>
            <person name="Durbin R.M."/>
            <person name="Hubbard T."/>
            <person name="Gibbs R.A."/>
            <person name="Beck S."/>
            <person name="Rogers J."/>
            <person name="Bentley D.R."/>
        </authorList>
    </citation>
    <scope>NUCLEOTIDE SEQUENCE [LARGE SCALE GENOMIC DNA]</scope>
</reference>
<reference key="5">
    <citation type="submission" date="2005-07" db="EMBL/GenBank/DDBJ databases">
        <authorList>
            <person name="Mural R.J."/>
            <person name="Istrail S."/>
            <person name="Sutton G.G."/>
            <person name="Florea L."/>
            <person name="Halpern A.L."/>
            <person name="Mobarry C.M."/>
            <person name="Lippert R."/>
            <person name="Walenz B."/>
            <person name="Shatkay H."/>
            <person name="Dew I."/>
            <person name="Miller J.R."/>
            <person name="Flanigan M.J."/>
            <person name="Edwards N.J."/>
            <person name="Bolanos R."/>
            <person name="Fasulo D."/>
            <person name="Halldorsson B.V."/>
            <person name="Hannenhalli S."/>
            <person name="Turner R."/>
            <person name="Yooseph S."/>
            <person name="Lu F."/>
            <person name="Nusskern D.R."/>
            <person name="Shue B.C."/>
            <person name="Zheng X.H."/>
            <person name="Zhong F."/>
            <person name="Delcher A.L."/>
            <person name="Huson D.H."/>
            <person name="Kravitz S.A."/>
            <person name="Mouchard L."/>
            <person name="Reinert K."/>
            <person name="Remington K.A."/>
            <person name="Clark A.G."/>
            <person name="Waterman M.S."/>
            <person name="Eichler E.E."/>
            <person name="Adams M.D."/>
            <person name="Hunkapiller M.W."/>
            <person name="Myers E.W."/>
            <person name="Venter J.C."/>
        </authorList>
    </citation>
    <scope>NUCLEOTIDE SEQUENCE [LARGE SCALE GENOMIC DNA]</scope>
</reference>
<reference key="6">
    <citation type="journal article" date="2004" name="Genome Res.">
        <title>The status, quality, and expansion of the NIH full-length cDNA project: the Mammalian Gene Collection (MGC).</title>
        <authorList>
            <consortium name="The MGC Project Team"/>
        </authorList>
    </citation>
    <scope>NUCLEOTIDE SEQUENCE [LARGE SCALE MRNA]</scope>
    <source>
        <tissue>Lung</tissue>
    </source>
</reference>
<name>MAGH1_HUMAN</name>
<comment type="interaction">
    <interactant intactId="EBI-473834">
        <id>Q9H213</id>
    </interactant>
    <interactant intactId="EBI-2549423">
        <id>Q6NT76</id>
        <label>HMBOX1</label>
    </interactant>
    <organismsDiffer>false</organismsDiffer>
    <experiments>3</experiments>
</comment>
<comment type="interaction">
    <interactant intactId="EBI-473834">
        <id>Q9H213</id>
    </interactant>
    <interactant intactId="EBI-399080">
        <id>Q92993</id>
        <label>KAT5</label>
    </interactant>
    <organismsDiffer>false</organismsDiffer>
    <experiments>3</experiments>
</comment>
<comment type="interaction">
    <interactant intactId="EBI-473834">
        <id>Q9H213</id>
    </interactant>
    <interactant intactId="EBI-11742507">
        <id>Q8TAP4-4</id>
        <label>LMO3</label>
    </interactant>
    <organismsDiffer>false</organismsDiffer>
    <experiments>3</experiments>
</comment>
<comment type="interaction">
    <interactant intactId="EBI-473834">
        <id>Q9H213</id>
    </interactant>
    <interactant intactId="EBI-1383528">
        <id>P17252</id>
        <label>PRKCA</label>
    </interactant>
    <organismsDiffer>false</organismsDiffer>
    <experiments>3</experiments>
</comment>
<comment type="interaction">
    <interactant intactId="EBI-473834">
        <id>Q9H213</id>
    </interactant>
    <interactant intactId="EBI-9090795">
        <id>Q15047-2</id>
        <label>SETDB1</label>
    </interactant>
    <organismsDiffer>false</organismsDiffer>
    <experiments>3</experiments>
</comment>
<comment type="interaction">
    <interactant intactId="EBI-473834">
        <id>Q9H213</id>
    </interactant>
    <interactant intactId="EBI-19952306">
        <id>O14492-2</id>
        <label>SH2B2</label>
    </interactant>
    <organismsDiffer>false</organismsDiffer>
    <experiments>3</experiments>
</comment>
<comment type="interaction">
    <interactant intactId="EBI-473834">
        <id>Q9H213</id>
    </interactant>
    <interactant intactId="EBI-357849">
        <id>Q15025</id>
        <label>TNIP1</label>
    </interactant>
    <organismsDiffer>false</organismsDiffer>
    <experiments>3</experiments>
</comment>
<comment type="interaction">
    <interactant intactId="EBI-473834">
        <id>Q9H213</id>
    </interactant>
    <interactant intactId="EBI-725997">
        <id>Q8WV44</id>
        <label>TRIM41</label>
    </interactant>
    <organismsDiffer>false</organismsDiffer>
    <experiments>3</experiments>
</comment>
<comment type="interaction">
    <interactant intactId="EBI-473834">
        <id>Q9H213</id>
    </interactant>
    <interactant intactId="EBI-359832">
        <id>P61981</id>
        <label>YWHAG</label>
    </interactant>
    <organismsDiffer>false</organismsDiffer>
    <experiments>3</experiments>
</comment>
<comment type="interaction">
    <interactant intactId="EBI-473834">
        <id>Q9H213</id>
    </interactant>
    <interactant intactId="EBI-751531">
        <id>O15535</id>
        <label>ZSCAN9</label>
    </interactant>
    <organismsDiffer>false</organismsDiffer>
    <experiments>3</experiments>
</comment>